<protein>
    <recommendedName>
        <fullName evidence="1">Bifunctional protein PyrR</fullName>
    </recommendedName>
    <domain>
        <recommendedName>
            <fullName evidence="1">Pyrimidine operon regulatory protein</fullName>
        </recommendedName>
    </domain>
    <domain>
        <recommendedName>
            <fullName evidence="1">Uracil phosphoribosyltransferase</fullName>
            <shortName evidence="1">UPRTase</shortName>
            <ecNumber evidence="1">2.4.2.9</ecNumber>
        </recommendedName>
    </domain>
</protein>
<reference key="1">
    <citation type="journal article" date="2007" name="Genome Biol.">
        <title>Characterization and modeling of the Haemophilus influenzae core and supragenomes based on the complete genomic sequences of Rd and 12 clinical nontypeable strains.</title>
        <authorList>
            <person name="Hogg J.S."/>
            <person name="Hu F.Z."/>
            <person name="Janto B."/>
            <person name="Boissy R."/>
            <person name="Hayes J."/>
            <person name="Keefe R."/>
            <person name="Post J.C."/>
            <person name="Ehrlich G.D."/>
        </authorList>
    </citation>
    <scope>NUCLEOTIDE SEQUENCE [LARGE SCALE GENOMIC DNA]</scope>
    <source>
        <strain>PittEE</strain>
    </source>
</reference>
<sequence>MEKIIIDHDRFLRTISRISHEIIEKHQTLDDLVIVGIKRRGAEIAELLQRRVEELSGINLPSMELDITFYRDDLTLVDQEDKMPVYSGSSQYLNIQDKTVILVDDVLFTGRTIRAAMDALTDFGRAAKIELVIFVDRGHRELPIRADYVGKNVPTSRDELVQVRTEKQDGCYEVAILGK</sequence>
<name>PYRR_HAEIE</name>
<evidence type="ECO:0000255" key="1">
    <source>
        <dbReference type="HAMAP-Rule" id="MF_01219"/>
    </source>
</evidence>
<dbReference type="EC" id="2.4.2.9" evidence="1"/>
<dbReference type="EMBL" id="CP000671">
    <property type="protein sequence ID" value="ABQ97631.1"/>
    <property type="molecule type" value="Genomic_DNA"/>
</dbReference>
<dbReference type="SMR" id="A5UA30"/>
<dbReference type="KEGG" id="hip:CGSHiEE_00695"/>
<dbReference type="HOGENOM" id="CLU_094234_2_1_6"/>
<dbReference type="GO" id="GO:0004845">
    <property type="term" value="F:uracil phosphoribosyltransferase activity"/>
    <property type="evidence" value="ECO:0007669"/>
    <property type="project" value="UniProtKB-UniRule"/>
</dbReference>
<dbReference type="GO" id="GO:0006355">
    <property type="term" value="P:regulation of DNA-templated transcription"/>
    <property type="evidence" value="ECO:0007669"/>
    <property type="project" value="UniProtKB-UniRule"/>
</dbReference>
<dbReference type="CDD" id="cd06223">
    <property type="entry name" value="PRTases_typeI"/>
    <property type="match status" value="1"/>
</dbReference>
<dbReference type="FunFam" id="3.40.50.2020:FF:000020">
    <property type="entry name" value="Bifunctional protein PyrR"/>
    <property type="match status" value="1"/>
</dbReference>
<dbReference type="Gene3D" id="3.40.50.2020">
    <property type="match status" value="1"/>
</dbReference>
<dbReference type="HAMAP" id="MF_01219">
    <property type="entry name" value="PyrR"/>
    <property type="match status" value="1"/>
</dbReference>
<dbReference type="InterPro" id="IPR000836">
    <property type="entry name" value="PRibTrfase_dom"/>
</dbReference>
<dbReference type="InterPro" id="IPR029057">
    <property type="entry name" value="PRTase-like"/>
</dbReference>
<dbReference type="InterPro" id="IPR023050">
    <property type="entry name" value="PyrR"/>
</dbReference>
<dbReference type="InterPro" id="IPR050137">
    <property type="entry name" value="PyrR_bifunctional"/>
</dbReference>
<dbReference type="NCBIfam" id="NF003549">
    <property type="entry name" value="PRK05205.1-5"/>
    <property type="match status" value="1"/>
</dbReference>
<dbReference type="PANTHER" id="PTHR11608">
    <property type="entry name" value="BIFUNCTIONAL PROTEIN PYRR"/>
    <property type="match status" value="1"/>
</dbReference>
<dbReference type="PANTHER" id="PTHR11608:SF0">
    <property type="entry name" value="BIFUNCTIONAL PROTEIN PYRR"/>
    <property type="match status" value="1"/>
</dbReference>
<dbReference type="Pfam" id="PF00156">
    <property type="entry name" value="Pribosyltran"/>
    <property type="match status" value="1"/>
</dbReference>
<dbReference type="SUPFAM" id="SSF53271">
    <property type="entry name" value="PRTase-like"/>
    <property type="match status" value="1"/>
</dbReference>
<keyword id="KW-0328">Glycosyltransferase</keyword>
<keyword id="KW-0804">Transcription</keyword>
<keyword id="KW-0805">Transcription regulation</keyword>
<keyword id="KW-0808">Transferase</keyword>
<comment type="function">
    <text evidence="1">Regulates the transcription of the pyrimidine nucleotide (pyr) operon in response to exogenous pyrimidines.</text>
</comment>
<comment type="function">
    <text evidence="1">Also displays a weak uracil phosphoribosyltransferase activity which is not physiologically significant.</text>
</comment>
<comment type="catalytic activity">
    <reaction evidence="1">
        <text>UMP + diphosphate = 5-phospho-alpha-D-ribose 1-diphosphate + uracil</text>
        <dbReference type="Rhea" id="RHEA:13017"/>
        <dbReference type="ChEBI" id="CHEBI:17568"/>
        <dbReference type="ChEBI" id="CHEBI:33019"/>
        <dbReference type="ChEBI" id="CHEBI:57865"/>
        <dbReference type="ChEBI" id="CHEBI:58017"/>
        <dbReference type="EC" id="2.4.2.9"/>
    </reaction>
</comment>
<comment type="similarity">
    <text evidence="1">Belongs to the purine/pyrimidine phosphoribosyltransferase family. PyrR subfamily.</text>
</comment>
<proteinExistence type="inferred from homology"/>
<accession>A5UA30</accession>
<feature type="chain" id="PRO_1000053838" description="Bifunctional protein PyrR">
    <location>
        <begin position="1"/>
        <end position="179"/>
    </location>
</feature>
<feature type="short sequence motif" description="PRPP-binding" evidence="1">
    <location>
        <begin position="100"/>
        <end position="112"/>
    </location>
</feature>
<organism>
    <name type="scientific">Haemophilus influenzae (strain PittEE)</name>
    <dbReference type="NCBI Taxonomy" id="374930"/>
    <lineage>
        <taxon>Bacteria</taxon>
        <taxon>Pseudomonadati</taxon>
        <taxon>Pseudomonadota</taxon>
        <taxon>Gammaproteobacteria</taxon>
        <taxon>Pasteurellales</taxon>
        <taxon>Pasteurellaceae</taxon>
        <taxon>Haemophilus</taxon>
    </lineage>
</organism>
<gene>
    <name evidence="1" type="primary">pyrR</name>
    <name type="ordered locus">CGSHiEE_00695</name>
</gene>